<gene>
    <name evidence="1" type="primary">rpsK</name>
    <name type="ordered locus">SCH_3352</name>
</gene>
<name>RS11_SALCH</name>
<proteinExistence type="inferred from homology"/>
<reference key="1">
    <citation type="journal article" date="2005" name="Nucleic Acids Res.">
        <title>The genome sequence of Salmonella enterica serovar Choleraesuis, a highly invasive and resistant zoonotic pathogen.</title>
        <authorList>
            <person name="Chiu C.-H."/>
            <person name="Tang P."/>
            <person name="Chu C."/>
            <person name="Hu S."/>
            <person name="Bao Q."/>
            <person name="Yu J."/>
            <person name="Chou Y.-Y."/>
            <person name="Wang H.-S."/>
            <person name="Lee Y.-S."/>
        </authorList>
    </citation>
    <scope>NUCLEOTIDE SEQUENCE [LARGE SCALE GENOMIC DNA]</scope>
    <source>
        <strain>SC-B67</strain>
    </source>
</reference>
<accession>Q57J54</accession>
<dbReference type="EMBL" id="AE017220">
    <property type="protein sequence ID" value="AAX67258.1"/>
    <property type="molecule type" value="Genomic_DNA"/>
</dbReference>
<dbReference type="RefSeq" id="WP_001029758.1">
    <property type="nucleotide sequence ID" value="NC_006905.1"/>
</dbReference>
<dbReference type="SMR" id="Q57J54"/>
<dbReference type="GeneID" id="98390419"/>
<dbReference type="KEGG" id="sec:SCH_3352"/>
<dbReference type="HOGENOM" id="CLU_072439_5_0_6"/>
<dbReference type="Proteomes" id="UP000000538">
    <property type="component" value="Chromosome"/>
</dbReference>
<dbReference type="GO" id="GO:1990904">
    <property type="term" value="C:ribonucleoprotein complex"/>
    <property type="evidence" value="ECO:0007669"/>
    <property type="project" value="UniProtKB-KW"/>
</dbReference>
<dbReference type="GO" id="GO:0005840">
    <property type="term" value="C:ribosome"/>
    <property type="evidence" value="ECO:0007669"/>
    <property type="project" value="UniProtKB-KW"/>
</dbReference>
<dbReference type="GO" id="GO:0019843">
    <property type="term" value="F:rRNA binding"/>
    <property type="evidence" value="ECO:0007669"/>
    <property type="project" value="UniProtKB-UniRule"/>
</dbReference>
<dbReference type="GO" id="GO:0003735">
    <property type="term" value="F:structural constituent of ribosome"/>
    <property type="evidence" value="ECO:0007669"/>
    <property type="project" value="InterPro"/>
</dbReference>
<dbReference type="GO" id="GO:0006412">
    <property type="term" value="P:translation"/>
    <property type="evidence" value="ECO:0007669"/>
    <property type="project" value="UniProtKB-UniRule"/>
</dbReference>
<dbReference type="FunFam" id="3.30.420.80:FF:000001">
    <property type="entry name" value="30S ribosomal protein S11"/>
    <property type="match status" value="1"/>
</dbReference>
<dbReference type="Gene3D" id="3.30.420.80">
    <property type="entry name" value="Ribosomal protein S11"/>
    <property type="match status" value="1"/>
</dbReference>
<dbReference type="HAMAP" id="MF_01310">
    <property type="entry name" value="Ribosomal_uS11"/>
    <property type="match status" value="1"/>
</dbReference>
<dbReference type="InterPro" id="IPR001971">
    <property type="entry name" value="Ribosomal_uS11"/>
</dbReference>
<dbReference type="InterPro" id="IPR019981">
    <property type="entry name" value="Ribosomal_uS11_bac-type"/>
</dbReference>
<dbReference type="InterPro" id="IPR018102">
    <property type="entry name" value="Ribosomal_uS11_CS"/>
</dbReference>
<dbReference type="InterPro" id="IPR036967">
    <property type="entry name" value="Ribosomal_uS11_sf"/>
</dbReference>
<dbReference type="NCBIfam" id="NF003698">
    <property type="entry name" value="PRK05309.1"/>
    <property type="match status" value="1"/>
</dbReference>
<dbReference type="NCBIfam" id="TIGR03632">
    <property type="entry name" value="uS11_bact"/>
    <property type="match status" value="1"/>
</dbReference>
<dbReference type="PANTHER" id="PTHR11759">
    <property type="entry name" value="40S RIBOSOMAL PROTEIN S14/30S RIBOSOMAL PROTEIN S11"/>
    <property type="match status" value="1"/>
</dbReference>
<dbReference type="Pfam" id="PF00411">
    <property type="entry name" value="Ribosomal_S11"/>
    <property type="match status" value="1"/>
</dbReference>
<dbReference type="PIRSF" id="PIRSF002131">
    <property type="entry name" value="Ribosomal_S11"/>
    <property type="match status" value="1"/>
</dbReference>
<dbReference type="SUPFAM" id="SSF53137">
    <property type="entry name" value="Translational machinery components"/>
    <property type="match status" value="1"/>
</dbReference>
<dbReference type="PROSITE" id="PS00054">
    <property type="entry name" value="RIBOSOMAL_S11"/>
    <property type="match status" value="1"/>
</dbReference>
<keyword id="KW-0687">Ribonucleoprotein</keyword>
<keyword id="KW-0689">Ribosomal protein</keyword>
<keyword id="KW-0694">RNA-binding</keyword>
<keyword id="KW-0699">rRNA-binding</keyword>
<comment type="function">
    <text evidence="1">Located on the platform of the 30S subunit, it bridges several disparate RNA helices of the 16S rRNA. Forms part of the Shine-Dalgarno cleft in the 70S ribosome.</text>
</comment>
<comment type="subunit">
    <text evidence="1">Part of the 30S ribosomal subunit. Interacts with proteins S7 and S18. Binds to IF-3.</text>
</comment>
<comment type="similarity">
    <text evidence="1">Belongs to the universal ribosomal protein uS11 family.</text>
</comment>
<sequence>MAKAPVRARKRVRKQVSDGVAHIHASFNNTIVTITDRQGNALGWATAGGSGFRGSRKSTPFAAQVAAERCADAVKEYGIKNLEVMVKGPGPGRESTIRALNAAGFRITNITDVTPIPHNGCRPPKKRRV</sequence>
<evidence type="ECO:0000255" key="1">
    <source>
        <dbReference type="HAMAP-Rule" id="MF_01310"/>
    </source>
</evidence>
<evidence type="ECO:0000305" key="2"/>
<organism>
    <name type="scientific">Salmonella choleraesuis (strain SC-B67)</name>
    <dbReference type="NCBI Taxonomy" id="321314"/>
    <lineage>
        <taxon>Bacteria</taxon>
        <taxon>Pseudomonadati</taxon>
        <taxon>Pseudomonadota</taxon>
        <taxon>Gammaproteobacteria</taxon>
        <taxon>Enterobacterales</taxon>
        <taxon>Enterobacteriaceae</taxon>
        <taxon>Salmonella</taxon>
    </lineage>
</organism>
<protein>
    <recommendedName>
        <fullName evidence="1">Small ribosomal subunit protein uS11</fullName>
    </recommendedName>
    <alternativeName>
        <fullName evidence="2">30S ribosomal protein S11</fullName>
    </alternativeName>
</protein>
<feature type="chain" id="PRO_0000230428" description="Small ribosomal subunit protein uS11">
    <location>
        <begin position="1"/>
        <end position="129"/>
    </location>
</feature>